<accession>Q19360</accession>
<sequence>MVSVDPLATERWRSIRRLTDRDSAYKVPWFVPGPENFEALQNTKILVIGAGGLGCELLKNLALSGFRTIEVIDMDTIDVSNLNRQFLFRESDVGKSKAEVAAAFVQQRVVGCQVTAHNCRIEDKGQEFYRKFSIIICGLDSIPARRWINGMLCDLVLEMADGKPDENTIIPMIDGGTEGFKGNARVIYPKFTACIDCTLDLYPPQVNFPLCTIAHTPRLPEHCIEYIKVVVWPEEKPFEGVSLDADDPIHVEWVLERASLRAEKYNIRGVDRRLTSGVLKRIIPAVASTNAVIAASCALEALKLATNIAKPIDNYLNFTQIHGAYTSVVSMMKDDNCLTCSGGRLPFEVSPSSTLESLIIRLSERFHLKHPTLATSTRKLYCISSFMPQFEQESKENLHTSMKDLVSDGEEILVSDEALSRALTLRIQLI</sequence>
<dbReference type="EC" id="6.2.1.64"/>
<dbReference type="EMBL" id="FO080391">
    <property type="protein sequence ID" value="CCD63395.1"/>
    <property type="molecule type" value="Genomic_DNA"/>
</dbReference>
<dbReference type="PIR" id="T16037">
    <property type="entry name" value="T16037"/>
</dbReference>
<dbReference type="RefSeq" id="NP_498534.2">
    <property type="nucleotide sequence ID" value="NM_066133.8"/>
</dbReference>
<dbReference type="SMR" id="Q19360"/>
<dbReference type="BioGRID" id="41194">
    <property type="interactions" value="8"/>
</dbReference>
<dbReference type="DIP" id="DIP-25942N"/>
<dbReference type="FunCoup" id="Q19360">
    <property type="interactions" value="3796"/>
</dbReference>
<dbReference type="IntAct" id="Q19360">
    <property type="interactions" value="1"/>
</dbReference>
<dbReference type="STRING" id="6239.F11H8.1.2"/>
<dbReference type="PaxDb" id="6239-F11H8.1.2"/>
<dbReference type="PeptideAtlas" id="Q19360"/>
<dbReference type="EnsemblMetazoa" id="F11H8.1.1">
    <property type="protein sequence ID" value="F11H8.1.1"/>
    <property type="gene ID" value="WBGene00004341"/>
</dbReference>
<dbReference type="EnsemblMetazoa" id="F11H8.1.2">
    <property type="protein sequence ID" value="F11H8.1.2"/>
    <property type="gene ID" value="WBGene00004341"/>
</dbReference>
<dbReference type="GeneID" id="175982"/>
<dbReference type="KEGG" id="cel:CELE_F11H8.1"/>
<dbReference type="UCSC" id="F11H8.1.1">
    <property type="organism name" value="c. elegans"/>
</dbReference>
<dbReference type="AGR" id="WB:WBGene00004341"/>
<dbReference type="CTD" id="175982"/>
<dbReference type="WormBase" id="F11H8.1">
    <property type="protein sequence ID" value="CE34538"/>
    <property type="gene ID" value="WBGene00004341"/>
    <property type="gene designation" value="rfl-1"/>
</dbReference>
<dbReference type="eggNOG" id="KOG2015">
    <property type="taxonomic scope" value="Eukaryota"/>
</dbReference>
<dbReference type="GeneTree" id="ENSGT00550000074831"/>
<dbReference type="HOGENOM" id="CLU_013325_13_1_1"/>
<dbReference type="InParanoid" id="Q19360"/>
<dbReference type="OMA" id="HIIEYVI"/>
<dbReference type="OrthoDB" id="5977743at2759"/>
<dbReference type="PhylomeDB" id="Q19360"/>
<dbReference type="Reactome" id="R-CEL-8951664">
    <property type="pathway name" value="Neddylation"/>
</dbReference>
<dbReference type="Reactome" id="R-CEL-983168">
    <property type="pathway name" value="Antigen processing: Ubiquitination &amp; Proteasome degradation"/>
</dbReference>
<dbReference type="UniPathway" id="UPA00885"/>
<dbReference type="PRO" id="PR:Q19360"/>
<dbReference type="Proteomes" id="UP000001940">
    <property type="component" value="Chromosome III"/>
</dbReference>
<dbReference type="Bgee" id="WBGene00004341">
    <property type="expression patterns" value="Expressed in germ line (C elegans) and 4 other cell types or tissues"/>
</dbReference>
<dbReference type="GO" id="GO:0005737">
    <property type="term" value="C:cytoplasm"/>
    <property type="evidence" value="ECO:0000314"/>
    <property type="project" value="WormBase"/>
</dbReference>
<dbReference type="GO" id="GO:0005634">
    <property type="term" value="C:nucleus"/>
    <property type="evidence" value="ECO:0000314"/>
    <property type="project" value="WormBase"/>
</dbReference>
<dbReference type="GO" id="GO:0005524">
    <property type="term" value="F:ATP binding"/>
    <property type="evidence" value="ECO:0007669"/>
    <property type="project" value="UniProtKB-KW"/>
</dbReference>
<dbReference type="GO" id="GO:0019781">
    <property type="term" value="F:NEDD8 activating enzyme activity"/>
    <property type="evidence" value="ECO:0000318"/>
    <property type="project" value="GO_Central"/>
</dbReference>
<dbReference type="GO" id="GO:0043518">
    <property type="term" value="P:negative regulation of DNA damage response, signal transduction by p53 class mediator"/>
    <property type="evidence" value="ECO:0000315"/>
    <property type="project" value="UniProtKB"/>
</dbReference>
<dbReference type="GO" id="GO:0045116">
    <property type="term" value="P:protein neddylation"/>
    <property type="evidence" value="ECO:0000315"/>
    <property type="project" value="WormBase"/>
</dbReference>
<dbReference type="CDD" id="cd01488">
    <property type="entry name" value="Uba3_RUB"/>
    <property type="match status" value="1"/>
</dbReference>
<dbReference type="FunFam" id="1.10.10.520:FF:000001">
    <property type="entry name" value="NEDD8-activating enzyme E1 catalytic subunit"/>
    <property type="match status" value="1"/>
</dbReference>
<dbReference type="FunFam" id="3.10.290.20:FF:000003">
    <property type="entry name" value="Ubiquitin-activating enzyme E1 C"/>
    <property type="match status" value="1"/>
</dbReference>
<dbReference type="Gene3D" id="3.40.50.720">
    <property type="entry name" value="NAD(P)-binding Rossmann-like Domain"/>
    <property type="match status" value="1"/>
</dbReference>
<dbReference type="Gene3D" id="1.10.10.520">
    <property type="entry name" value="Ubiquitin activating enzymes (Uba3). Chain: B, domain 2"/>
    <property type="match status" value="1"/>
</dbReference>
<dbReference type="Gene3D" id="3.10.290.20">
    <property type="entry name" value="Ubiquitin-like 2 activating enzyme e1b. Chain: B, domain 3"/>
    <property type="match status" value="1"/>
</dbReference>
<dbReference type="InterPro" id="IPR014929">
    <property type="entry name" value="E2-binding"/>
</dbReference>
<dbReference type="InterPro" id="IPR045886">
    <property type="entry name" value="ThiF/MoeB/HesA"/>
</dbReference>
<dbReference type="InterPro" id="IPR000594">
    <property type="entry name" value="ThiF_NAD_FAD-bd"/>
</dbReference>
<dbReference type="InterPro" id="IPR023318">
    <property type="entry name" value="Ub_act_enz_dom_a_sf"/>
</dbReference>
<dbReference type="InterPro" id="IPR030468">
    <property type="entry name" value="Uba3_N"/>
</dbReference>
<dbReference type="InterPro" id="IPR035985">
    <property type="entry name" value="Ubiquitin-activating_enz"/>
</dbReference>
<dbReference type="InterPro" id="IPR033127">
    <property type="entry name" value="UBQ-activ_enz_E1_Cys_AS"/>
</dbReference>
<dbReference type="PANTHER" id="PTHR10953:SF6">
    <property type="entry name" value="NEDD8-ACTIVATING ENZYME E1 CATALYTIC SUBUNIT"/>
    <property type="match status" value="1"/>
</dbReference>
<dbReference type="PANTHER" id="PTHR10953">
    <property type="entry name" value="UBIQUITIN-ACTIVATING ENZYME E1"/>
    <property type="match status" value="1"/>
</dbReference>
<dbReference type="Pfam" id="PF08825">
    <property type="entry name" value="E2_bind"/>
    <property type="match status" value="1"/>
</dbReference>
<dbReference type="Pfam" id="PF00899">
    <property type="entry name" value="ThiF"/>
    <property type="match status" value="1"/>
</dbReference>
<dbReference type="SMART" id="SM01181">
    <property type="entry name" value="E2_bind"/>
    <property type="match status" value="1"/>
</dbReference>
<dbReference type="SUPFAM" id="SSF69572">
    <property type="entry name" value="Activating enzymes of the ubiquitin-like proteins"/>
    <property type="match status" value="1"/>
</dbReference>
<dbReference type="PROSITE" id="PS00865">
    <property type="entry name" value="UBIQUITIN_ACTIVAT_2"/>
    <property type="match status" value="1"/>
</dbReference>
<name>UBA3_CAEEL</name>
<protein>
    <recommendedName>
        <fullName>NEDD8-activating enzyme E1 catalytic subunit</fullName>
        <ecNumber>6.2.1.64</ecNumber>
    </recommendedName>
    <alternativeName>
        <fullName>Ectopic membrane ruffles in embryo protein 1</fullName>
    </alternativeName>
    <alternativeName>
        <fullName>Ubiquitin-activating enzyme 3 homolog</fullName>
    </alternativeName>
</protein>
<reference key="1">
    <citation type="journal article" date="1998" name="Science">
        <title>Genome sequence of the nematode C. elegans: a platform for investigating biology.</title>
        <authorList>
            <consortium name="The C. elegans sequencing consortium"/>
        </authorList>
    </citation>
    <scope>NUCLEOTIDE SEQUENCE [LARGE SCALE GENOMIC DNA]</scope>
    <source>
        <strain>Bristol N2</strain>
    </source>
</reference>
<reference key="2">
    <citation type="journal article" date="2000" name="Dev. Biol.">
        <title>The NED-8 conjugating system in Caenorhabditis elegans is required for embryogenesis and terminal differentiation of the hypodermis.</title>
        <authorList>
            <person name="Jones D."/>
            <person name="Candido E.P.M."/>
        </authorList>
    </citation>
    <scope>IDENTIFICATION</scope>
    <scope>NOMENCLATURE</scope>
    <scope>DEVELOPMENTAL STAGE</scope>
</reference>
<reference key="3">
    <citation type="journal article" date="2002" name="Science">
        <title>Cytoskeletal regulation by the Nedd8 ubiquitin-like protein modification pathway.</title>
        <authorList>
            <person name="Kurz T."/>
            <person name="Pintard L."/>
            <person name="Willis J.H."/>
            <person name="Hamill D.R."/>
            <person name="Goenczy P."/>
            <person name="Peter M."/>
            <person name="Bowerman B."/>
        </authorList>
    </citation>
    <scope>FUNCTION</scope>
    <scope>DISRUPTION PHENOTYPE</scope>
</reference>
<reference key="4">
    <citation type="journal article" date="2009" name="Genetics">
        <title>Using RNA interference to identify specific modifiers of a temperature-sensitive, embryonic-lethal mutation in the Caenorhabditis elegans ubiquitin-like Nedd8 protein modification pathway E1-activating gene rfl-1.</title>
        <authorList>
            <person name="Dorfman M."/>
            <person name="Gomes J.E."/>
            <person name="O'Rourke S."/>
            <person name="Bowerman B."/>
        </authorList>
    </citation>
    <scope>FUNCTION</scope>
    <scope>SUBCELLULAR LOCATION</scope>
    <scope>TISSUE SPECIFICITY</scope>
    <scope>DEVELOPMENTAL STAGE</scope>
    <scope>MUTAGENESIS OF ALA-262</scope>
</reference>
<feature type="chain" id="PRO_0000194947" description="NEDD8-activating enzyme E1 catalytic subunit">
    <location>
        <begin position="1"/>
        <end position="430"/>
    </location>
</feature>
<feature type="active site" description="Glycyl thioester intermediate" evidence="3">
    <location>
        <position position="211"/>
    </location>
</feature>
<feature type="binding site" evidence="1">
    <location>
        <begin position="52"/>
        <end position="76"/>
    </location>
    <ligand>
        <name>ATP</name>
        <dbReference type="ChEBI" id="CHEBI:30616"/>
    </ligand>
</feature>
<feature type="mutagenesis site" description="In or198; at 25 degrees Celsius, embryonic lethal due to incomplete cytokinesis with ectopic furrow formation and mis-orientation of mitotic spindle. Reduced cul-3 neddylation." evidence="6">
    <original>A</original>
    <variation>V</variation>
    <location>
        <position position="262"/>
    </location>
</feature>
<keyword id="KW-0067">ATP-binding</keyword>
<keyword id="KW-0963">Cytoplasm</keyword>
<keyword id="KW-0217">Developmental protein</keyword>
<keyword id="KW-0436">Ligase</keyword>
<keyword id="KW-0547">Nucleotide-binding</keyword>
<keyword id="KW-0539">Nucleus</keyword>
<keyword id="KW-1185">Reference proteome</keyword>
<keyword id="KW-0833">Ubl conjugation pathway</keyword>
<evidence type="ECO:0000250" key="1"/>
<evidence type="ECO:0000250" key="2">
    <source>
        <dbReference type="UniProtKB" id="Q8TBC4"/>
    </source>
</evidence>
<evidence type="ECO:0000255" key="3">
    <source>
        <dbReference type="PROSITE-ProRule" id="PRU10132"/>
    </source>
</evidence>
<evidence type="ECO:0000269" key="4">
    <source>
    </source>
</evidence>
<evidence type="ECO:0000269" key="5">
    <source>
    </source>
</evidence>
<evidence type="ECO:0000269" key="6">
    <source>
    </source>
</evidence>
<evidence type="ECO:0000303" key="7">
    <source>
    </source>
</evidence>
<evidence type="ECO:0000303" key="8">
    <source>
    </source>
</evidence>
<evidence type="ECO:0000305" key="9"/>
<organism>
    <name type="scientific">Caenorhabditis elegans</name>
    <dbReference type="NCBI Taxonomy" id="6239"/>
    <lineage>
        <taxon>Eukaryota</taxon>
        <taxon>Metazoa</taxon>
        <taxon>Ecdysozoa</taxon>
        <taxon>Nematoda</taxon>
        <taxon>Chromadorea</taxon>
        <taxon>Rhabditida</taxon>
        <taxon>Rhabditina</taxon>
        <taxon>Rhabditomorpha</taxon>
        <taxon>Rhabditoidea</taxon>
        <taxon>Rhabditidae</taxon>
        <taxon>Peloderinae</taxon>
        <taxon>Caenorhabditis</taxon>
    </lineage>
</organism>
<gene>
    <name evidence="8" type="primary">rfl-1</name>
    <name evidence="7" type="synonym">uba-3</name>
    <name type="ORF">F11H8.1</name>
</gene>
<proteinExistence type="evidence at protein level"/>
<comment type="function">
    <text evidence="2 5 6">Catalytic subunit of the dimeric rfl-1 (uba-3)-ula-1 E1 enzyme. E1 activates NEDD8 by first adenylating its C-terminal glycine residue with ATP, thereafter linking this residue to the side chain of the catalytic cysteine, yielding a NEDD8-uba-3 thioester and free AMP. E1 finally transfers NEDD8 to the catalytic cysteine of ubc-12 (By similarity). Required for cytokinesis and mitotic spindle orientation during early embryogenesis (PubMed:11847342, PubMed:19528325).</text>
</comment>
<comment type="catalytic activity">
    <reaction>
        <text>ATP + [NEDD8 protein] + [E1 NEDD8-activating enzyme]-L-cysteine = AMP + diphosphate + [E1 NEDD8-activating enzyme]-S-[NEDD8 protein]-yl-L-cysteine.</text>
        <dbReference type="EC" id="6.2.1.64"/>
    </reaction>
</comment>
<comment type="pathway">
    <text>Protein modification; protein neddylation.</text>
</comment>
<comment type="subunit">
    <text evidence="1">Heterodimer of uba-3 and ula-1. Interacts with NEDD8 and ubc-12 (By similarity).</text>
</comment>
<comment type="subcellular location">
    <subcellularLocation>
        <location evidence="6">Nucleus</location>
    </subcellularLocation>
    <subcellularLocation>
        <location evidence="6">Cytoplasm</location>
    </subcellularLocation>
    <text evidence="6">Predominantly localizes in the nucleus in the 1- and 2-cell embryos.</text>
</comment>
<comment type="tissue specificity">
    <text evidence="6">Expressed in intestine, vulva epithelium and head and tail neurons.</text>
</comment>
<comment type="developmental stage">
    <text evidence="4 6">Expressed throughout development.</text>
</comment>
<comment type="disruption phenotype">
    <text evidence="5">RNAi-mediated knockdown results in temperature-sensitive embryonic lethality.</text>
</comment>
<comment type="similarity">
    <text evidence="9">Belongs to the ubiquitin-activating E1 family. UBA3 subfamily.</text>
</comment>